<accession>Q3ATM0</accession>
<protein>
    <recommendedName>
        <fullName evidence="1">Phosphomethylpyrimidine synthase</fullName>
        <ecNumber evidence="1">4.1.99.17</ecNumber>
    </recommendedName>
    <alternativeName>
        <fullName evidence="1">Hydroxymethylpyrimidine phosphate synthase</fullName>
        <shortName evidence="1">HMP-P synthase</shortName>
        <shortName evidence="1">HMP-phosphate synthase</shortName>
        <shortName evidence="1">HMPP synthase</shortName>
    </alternativeName>
    <alternativeName>
        <fullName evidence="1">Thiamine biosynthesis protein ThiC</fullName>
    </alternativeName>
</protein>
<evidence type="ECO:0000255" key="1">
    <source>
        <dbReference type="HAMAP-Rule" id="MF_00089"/>
    </source>
</evidence>
<comment type="function">
    <text evidence="1">Catalyzes the synthesis of the hydroxymethylpyrimidine phosphate (HMP-P) moiety of thiamine from aminoimidazole ribotide (AIR) in a radical S-adenosyl-L-methionine (SAM)-dependent reaction.</text>
</comment>
<comment type="catalytic activity">
    <reaction evidence="1">
        <text>5-amino-1-(5-phospho-beta-D-ribosyl)imidazole + S-adenosyl-L-methionine = 4-amino-2-methyl-5-(phosphooxymethyl)pyrimidine + CO + 5'-deoxyadenosine + formate + L-methionine + 3 H(+)</text>
        <dbReference type="Rhea" id="RHEA:24840"/>
        <dbReference type="ChEBI" id="CHEBI:15378"/>
        <dbReference type="ChEBI" id="CHEBI:15740"/>
        <dbReference type="ChEBI" id="CHEBI:17245"/>
        <dbReference type="ChEBI" id="CHEBI:17319"/>
        <dbReference type="ChEBI" id="CHEBI:57844"/>
        <dbReference type="ChEBI" id="CHEBI:58354"/>
        <dbReference type="ChEBI" id="CHEBI:59789"/>
        <dbReference type="ChEBI" id="CHEBI:137981"/>
        <dbReference type="EC" id="4.1.99.17"/>
    </reaction>
</comment>
<comment type="cofactor">
    <cofactor evidence="1">
        <name>[4Fe-4S] cluster</name>
        <dbReference type="ChEBI" id="CHEBI:49883"/>
    </cofactor>
    <text evidence="1">Binds 1 [4Fe-4S] cluster per subunit. The cluster is coordinated with 3 cysteines and an exchangeable S-adenosyl-L-methionine.</text>
</comment>
<comment type="pathway">
    <text evidence="1">Cofactor biosynthesis; thiamine diphosphate biosynthesis.</text>
</comment>
<comment type="similarity">
    <text evidence="1">Belongs to the ThiC family.</text>
</comment>
<gene>
    <name evidence="1" type="primary">thiC</name>
    <name type="ordered locus">Cag_0382</name>
</gene>
<name>THIC_CHLCH</name>
<proteinExistence type="inferred from homology"/>
<reference key="1">
    <citation type="submission" date="2005-08" db="EMBL/GenBank/DDBJ databases">
        <title>Complete sequence of Chlorobium chlorochromatii CaD3.</title>
        <authorList>
            <consortium name="US DOE Joint Genome Institute"/>
            <person name="Copeland A."/>
            <person name="Lucas S."/>
            <person name="Lapidus A."/>
            <person name="Barry K."/>
            <person name="Detter J.C."/>
            <person name="Glavina T."/>
            <person name="Hammon N."/>
            <person name="Israni S."/>
            <person name="Pitluck S."/>
            <person name="Bryant D."/>
            <person name="Schmutz J."/>
            <person name="Larimer F."/>
            <person name="Land M."/>
            <person name="Kyrpides N."/>
            <person name="Ivanova N."/>
            <person name="Richardson P."/>
        </authorList>
    </citation>
    <scope>NUCLEOTIDE SEQUENCE [LARGE SCALE GENOMIC DNA]</scope>
    <source>
        <strain>CaD3</strain>
    </source>
</reference>
<keyword id="KW-0004">4Fe-4S</keyword>
<keyword id="KW-0408">Iron</keyword>
<keyword id="KW-0411">Iron-sulfur</keyword>
<keyword id="KW-0456">Lyase</keyword>
<keyword id="KW-0479">Metal-binding</keyword>
<keyword id="KW-0949">S-adenosyl-L-methionine</keyword>
<keyword id="KW-0784">Thiamine biosynthesis</keyword>
<keyword id="KW-0862">Zinc</keyword>
<sequence>MSKAPLFEKISVKGTLFPIEVSMKRLHLSHPYTCNGQEFSSLPMYDTSGLHGDCRTQVDPHVGLPPLRSSWNFPRTVQLGVAQTQMHYARKGVITPEMEYVAIRENQQLEEWIRSFNRHGKKVEPITPEFVRQEIAAGRAIIPANLKHPELEPMIIGRHFRVKINSNIGNSAMGSSIEEEVEKAVWSCRWGADTVMDLSTGANIHQTREWILRNSPVPIGTVPVYQALEKAGGKAENLTWELYRDTLIEQAEQGVDYFTIHAGILQEHLPYAERRLTGIVSRGGSIMATWCRHHQQENFLYTHFNDICEILKSYDIAVSLGDALRPGSILDANDEAQFGELKVLGELTKQAWQHEVQVMIEGPGHVPLNLIEENMQKELELCYEAPFYTLGPLITDIAAGYDHINSAIGGALLASLGCSMLCYVTPKEHLGLPDRNDVREGVIAHKVAAHGADIARGNPTAWLRDTLMSQARYSFAWEDQFNLSLDPEKTRAVHSQSIAASGYSAPNPDFCTMCGPDFCSMKRTQKMGKGN</sequence>
<feature type="chain" id="PRO_0000242251" description="Phosphomethylpyrimidine synthase">
    <location>
        <begin position="1"/>
        <end position="531"/>
    </location>
</feature>
<feature type="binding site" evidence="1">
    <location>
        <position position="167"/>
    </location>
    <ligand>
        <name>substrate</name>
    </ligand>
</feature>
<feature type="binding site" evidence="1">
    <location>
        <position position="196"/>
    </location>
    <ligand>
        <name>substrate</name>
    </ligand>
</feature>
<feature type="binding site" evidence="1">
    <location>
        <position position="225"/>
    </location>
    <ligand>
        <name>substrate</name>
    </ligand>
</feature>
<feature type="binding site" evidence="1">
    <location>
        <position position="261"/>
    </location>
    <ligand>
        <name>substrate</name>
    </ligand>
</feature>
<feature type="binding site" evidence="1">
    <location>
        <begin position="281"/>
        <end position="283"/>
    </location>
    <ligand>
        <name>substrate</name>
    </ligand>
</feature>
<feature type="binding site" evidence="1">
    <location>
        <begin position="322"/>
        <end position="325"/>
    </location>
    <ligand>
        <name>substrate</name>
    </ligand>
</feature>
<feature type="binding site" evidence="1">
    <location>
        <position position="361"/>
    </location>
    <ligand>
        <name>substrate</name>
    </ligand>
</feature>
<feature type="binding site" evidence="1">
    <location>
        <position position="365"/>
    </location>
    <ligand>
        <name>Zn(2+)</name>
        <dbReference type="ChEBI" id="CHEBI:29105"/>
    </ligand>
</feature>
<feature type="binding site" evidence="1">
    <location>
        <position position="388"/>
    </location>
    <ligand>
        <name>substrate</name>
    </ligand>
</feature>
<feature type="binding site" evidence="1">
    <location>
        <position position="429"/>
    </location>
    <ligand>
        <name>Zn(2+)</name>
        <dbReference type="ChEBI" id="CHEBI:29105"/>
    </ligand>
</feature>
<feature type="binding site" evidence="1">
    <location>
        <position position="511"/>
    </location>
    <ligand>
        <name>[4Fe-4S] cluster</name>
        <dbReference type="ChEBI" id="CHEBI:49883"/>
        <note>4Fe-4S-S-AdoMet</note>
    </ligand>
</feature>
<feature type="binding site" evidence="1">
    <location>
        <position position="514"/>
    </location>
    <ligand>
        <name>[4Fe-4S] cluster</name>
        <dbReference type="ChEBI" id="CHEBI:49883"/>
        <note>4Fe-4S-S-AdoMet</note>
    </ligand>
</feature>
<feature type="binding site" evidence="1">
    <location>
        <position position="519"/>
    </location>
    <ligand>
        <name>[4Fe-4S] cluster</name>
        <dbReference type="ChEBI" id="CHEBI:49883"/>
        <note>4Fe-4S-S-AdoMet</note>
    </ligand>
</feature>
<organism>
    <name type="scientific">Chlorobium chlorochromatii (strain CaD3)</name>
    <dbReference type="NCBI Taxonomy" id="340177"/>
    <lineage>
        <taxon>Bacteria</taxon>
        <taxon>Pseudomonadati</taxon>
        <taxon>Chlorobiota</taxon>
        <taxon>Chlorobiia</taxon>
        <taxon>Chlorobiales</taxon>
        <taxon>Chlorobiaceae</taxon>
        <taxon>Chlorobium/Pelodictyon group</taxon>
        <taxon>Chlorobium</taxon>
    </lineage>
</organism>
<dbReference type="EC" id="4.1.99.17" evidence="1"/>
<dbReference type="EMBL" id="CP000108">
    <property type="protein sequence ID" value="ABB27655.1"/>
    <property type="molecule type" value="Genomic_DNA"/>
</dbReference>
<dbReference type="SMR" id="Q3ATM0"/>
<dbReference type="STRING" id="340177.Cag_0382"/>
<dbReference type="KEGG" id="cch:Cag_0382"/>
<dbReference type="eggNOG" id="COG0422">
    <property type="taxonomic scope" value="Bacteria"/>
</dbReference>
<dbReference type="HOGENOM" id="CLU_013181_2_1_10"/>
<dbReference type="OrthoDB" id="9805897at2"/>
<dbReference type="UniPathway" id="UPA00060"/>
<dbReference type="GO" id="GO:0005829">
    <property type="term" value="C:cytosol"/>
    <property type="evidence" value="ECO:0007669"/>
    <property type="project" value="TreeGrafter"/>
</dbReference>
<dbReference type="GO" id="GO:0051539">
    <property type="term" value="F:4 iron, 4 sulfur cluster binding"/>
    <property type="evidence" value="ECO:0007669"/>
    <property type="project" value="UniProtKB-KW"/>
</dbReference>
<dbReference type="GO" id="GO:0016830">
    <property type="term" value="F:carbon-carbon lyase activity"/>
    <property type="evidence" value="ECO:0007669"/>
    <property type="project" value="InterPro"/>
</dbReference>
<dbReference type="GO" id="GO:0008270">
    <property type="term" value="F:zinc ion binding"/>
    <property type="evidence" value="ECO:0007669"/>
    <property type="project" value="UniProtKB-UniRule"/>
</dbReference>
<dbReference type="GO" id="GO:0009228">
    <property type="term" value="P:thiamine biosynthetic process"/>
    <property type="evidence" value="ECO:0007669"/>
    <property type="project" value="UniProtKB-KW"/>
</dbReference>
<dbReference type="GO" id="GO:0009229">
    <property type="term" value="P:thiamine diphosphate biosynthetic process"/>
    <property type="evidence" value="ECO:0007669"/>
    <property type="project" value="UniProtKB-UniRule"/>
</dbReference>
<dbReference type="FunFam" id="3.20.20.540:FF:000001">
    <property type="entry name" value="Phosphomethylpyrimidine synthase"/>
    <property type="match status" value="1"/>
</dbReference>
<dbReference type="Gene3D" id="6.10.250.620">
    <property type="match status" value="1"/>
</dbReference>
<dbReference type="Gene3D" id="3.20.20.540">
    <property type="entry name" value="Radical SAM ThiC family, central domain"/>
    <property type="match status" value="1"/>
</dbReference>
<dbReference type="HAMAP" id="MF_00089">
    <property type="entry name" value="ThiC"/>
    <property type="match status" value="1"/>
</dbReference>
<dbReference type="InterPro" id="IPR037509">
    <property type="entry name" value="ThiC"/>
</dbReference>
<dbReference type="InterPro" id="IPR025747">
    <property type="entry name" value="ThiC-associated_dom"/>
</dbReference>
<dbReference type="InterPro" id="IPR038521">
    <property type="entry name" value="ThiC/Bza_core_dom"/>
</dbReference>
<dbReference type="InterPro" id="IPR002817">
    <property type="entry name" value="ThiC/BzaA/B"/>
</dbReference>
<dbReference type="NCBIfam" id="NF006763">
    <property type="entry name" value="PRK09284.1"/>
    <property type="match status" value="1"/>
</dbReference>
<dbReference type="NCBIfam" id="NF009895">
    <property type="entry name" value="PRK13352.1"/>
    <property type="match status" value="1"/>
</dbReference>
<dbReference type="NCBIfam" id="TIGR00190">
    <property type="entry name" value="thiC"/>
    <property type="match status" value="1"/>
</dbReference>
<dbReference type="PANTHER" id="PTHR30557:SF1">
    <property type="entry name" value="PHOSPHOMETHYLPYRIMIDINE SYNTHASE, CHLOROPLASTIC"/>
    <property type="match status" value="1"/>
</dbReference>
<dbReference type="PANTHER" id="PTHR30557">
    <property type="entry name" value="THIAMINE BIOSYNTHESIS PROTEIN THIC"/>
    <property type="match status" value="1"/>
</dbReference>
<dbReference type="Pfam" id="PF13667">
    <property type="entry name" value="ThiC-associated"/>
    <property type="match status" value="1"/>
</dbReference>
<dbReference type="Pfam" id="PF01964">
    <property type="entry name" value="ThiC_Rad_SAM"/>
    <property type="match status" value="1"/>
</dbReference>
<dbReference type="SFLD" id="SFLDF00407">
    <property type="entry name" value="phosphomethylpyrimidine_syntha"/>
    <property type="match status" value="1"/>
</dbReference>
<dbReference type="SFLD" id="SFLDG01114">
    <property type="entry name" value="phosphomethylpyrimidine_syntha"/>
    <property type="match status" value="1"/>
</dbReference>
<dbReference type="SFLD" id="SFLDS00113">
    <property type="entry name" value="Radical_SAM_Phosphomethylpyrim"/>
    <property type="match status" value="1"/>
</dbReference>